<keyword id="KW-0967">Endosome</keyword>
<keyword id="KW-0472">Membrane</keyword>
<keyword id="KW-1185">Reference proteome</keyword>
<proteinExistence type="evidence at transcript level"/>
<dbReference type="EMBL" id="BC056049">
    <property type="protein sequence ID" value="AAH56049.1"/>
    <property type="molecule type" value="mRNA"/>
</dbReference>
<dbReference type="RefSeq" id="NP_001079867.1">
    <property type="nucleotide sequence ID" value="NM_001086398.1"/>
</dbReference>
<dbReference type="RefSeq" id="XP_018119371.1">
    <property type="nucleotide sequence ID" value="XM_018263882.1"/>
</dbReference>
<dbReference type="SMR" id="Q7T0T2"/>
<dbReference type="DNASU" id="379557"/>
<dbReference type="GeneID" id="379557"/>
<dbReference type="KEGG" id="xla:379557"/>
<dbReference type="AGR" id="Xenbase:XB-GENE-6255472"/>
<dbReference type="CTD" id="379557"/>
<dbReference type="Xenbase" id="XB-GENE-6255472">
    <property type="gene designation" value="lamtor3.L"/>
</dbReference>
<dbReference type="OMA" id="YYNAYQV"/>
<dbReference type="OrthoDB" id="343907at2759"/>
<dbReference type="Proteomes" id="UP000186698">
    <property type="component" value="Chromosome 1L"/>
</dbReference>
<dbReference type="Bgee" id="379557">
    <property type="expression patterns" value="Expressed in heart and 20 other cell types or tissues"/>
</dbReference>
<dbReference type="GO" id="GO:0031902">
    <property type="term" value="C:late endosome membrane"/>
    <property type="evidence" value="ECO:0007669"/>
    <property type="project" value="UniProtKB-SubCell"/>
</dbReference>
<dbReference type="GO" id="GO:0005765">
    <property type="term" value="C:lysosomal membrane"/>
    <property type="evidence" value="ECO:0000250"/>
    <property type="project" value="UniProtKB"/>
</dbReference>
<dbReference type="GO" id="GO:0071986">
    <property type="term" value="C:Ragulator complex"/>
    <property type="evidence" value="ECO:0000250"/>
    <property type="project" value="UniProtKB"/>
</dbReference>
<dbReference type="GO" id="GO:0071230">
    <property type="term" value="P:cellular response to amino acid stimulus"/>
    <property type="evidence" value="ECO:0000250"/>
    <property type="project" value="UniProtKB"/>
</dbReference>
<dbReference type="GO" id="GO:0032008">
    <property type="term" value="P:positive regulation of TOR signaling"/>
    <property type="evidence" value="ECO:0000250"/>
    <property type="project" value="UniProtKB"/>
</dbReference>
<dbReference type="GO" id="GO:1904263">
    <property type="term" value="P:positive regulation of TORC1 signaling"/>
    <property type="evidence" value="ECO:0000250"/>
    <property type="project" value="UniProtKB"/>
</dbReference>
<dbReference type="GO" id="GO:0008104">
    <property type="term" value="P:protein localization"/>
    <property type="evidence" value="ECO:0000250"/>
    <property type="project" value="UniProtKB"/>
</dbReference>
<dbReference type="FunFam" id="3.30.450.30:FF:000003">
    <property type="entry name" value="ragulator complex protein LAMTOR3 homolog"/>
    <property type="match status" value="1"/>
</dbReference>
<dbReference type="Gene3D" id="3.30.450.30">
    <property type="entry name" value="Dynein light chain 2a, cytoplasmic"/>
    <property type="match status" value="1"/>
</dbReference>
<dbReference type="InterPro" id="IPR015019">
    <property type="entry name" value="LAMTOR3"/>
</dbReference>
<dbReference type="PANTHER" id="PTHR13378:SF1">
    <property type="entry name" value="RAGULATOR COMPLEX PROTEIN LAMTOR3"/>
    <property type="match status" value="1"/>
</dbReference>
<dbReference type="PANTHER" id="PTHR13378">
    <property type="entry name" value="REGULATOR COMPLEX PROTEIN LAMTOR3"/>
    <property type="match status" value="1"/>
</dbReference>
<dbReference type="Pfam" id="PF08923">
    <property type="entry name" value="MAPKK1_Int"/>
    <property type="match status" value="1"/>
</dbReference>
<dbReference type="SMART" id="SM01278">
    <property type="entry name" value="MAPKK1_Int"/>
    <property type="match status" value="1"/>
</dbReference>
<dbReference type="SUPFAM" id="SSF103196">
    <property type="entry name" value="Roadblock/LC7 domain"/>
    <property type="match status" value="1"/>
</dbReference>
<protein>
    <recommendedName>
        <fullName>Ragulator complex protein LAMTOR3-B</fullName>
    </recommendedName>
    <alternativeName>
        <fullName>Late endosomal/lysosomal adaptor and MAPK and MTOR activator 3-B</fullName>
    </alternativeName>
    <alternativeName>
        <fullName>Mitogen-activated protein kinase scaffold protein 1</fullName>
    </alternativeName>
</protein>
<sequence>MAEELKRFLYKKLPSIEGLHAIVVSDRDGVPVIKVANENAPELALRPSFLSTFALATDQGSKLGLSKNKSIICYYDTCQVVQFNRLPLVVSFIASSDANTGLLLSLNEELGDLFEELQHAVEI</sequence>
<name>LTR3B_XENLA</name>
<feature type="chain" id="PRO_0000356166" description="Ragulator complex protein LAMTOR3-B">
    <location>
        <begin position="1"/>
        <end position="123"/>
    </location>
</feature>
<accession>Q7T0T2</accession>
<reference key="1">
    <citation type="submission" date="2003-08" db="EMBL/GenBank/DDBJ databases">
        <authorList>
            <consortium name="NIH - Xenopus Gene Collection (XGC) project"/>
        </authorList>
    </citation>
    <scope>NUCLEOTIDE SEQUENCE [LARGE SCALE MRNA]</scope>
    <source>
        <tissue>Spleen</tissue>
    </source>
</reference>
<comment type="function">
    <text evidence="2">As part of the Ragulator complex it is involved in amino acid sensing and activation of mTORC1, a signaling complex promoting cell growth in response to growth factors, energy levels, and amino acids. Activated by amino acids through a mechanism involving the lysosomal V-ATPase, the Ragulator plays a dual role for the small GTPases Rag (RagA/RRAGA, RagB/RRAGB, RagC/RRAGC and/or RagD/RRAGD): it (1) acts as a guanine nucleotide exchange factor (GEF), activating the small GTPases Rag and (2) mediates recruitment of Rag GTPases to the lysosome membrane. Activated Ragulator and Rag GTPases function as a scaffold recruiting mTORC1 to lysosomes where it is in turn activated.</text>
</comment>
<comment type="subunit">
    <text evidence="1 2">Part of the Ragulator complex composed of lamtor1, lamtor2, lamtor3, lamtor4 and lamtor5. The Ragulator complex interacts with slc38a9; the probable amino acid sensor. Component of the lysosomal folliculin complex (LFC).</text>
</comment>
<comment type="subcellular location">
    <subcellularLocation>
        <location evidence="1">Late endosome membrane</location>
        <topology evidence="1">Peripheral membrane protein</topology>
        <orientation evidence="1">Cytoplasmic side</orientation>
    </subcellularLocation>
    <text evidence="1">Recruited to lysosome and endosome membranes by LAMTOR1.</text>
</comment>
<comment type="similarity">
    <text evidence="3">Belongs to the LAMTOR3 family.</text>
</comment>
<gene>
    <name type="primary">lamtor3-b</name>
    <name type="synonym">mapksp1</name>
</gene>
<organism>
    <name type="scientific">Xenopus laevis</name>
    <name type="common">African clawed frog</name>
    <dbReference type="NCBI Taxonomy" id="8355"/>
    <lineage>
        <taxon>Eukaryota</taxon>
        <taxon>Metazoa</taxon>
        <taxon>Chordata</taxon>
        <taxon>Craniata</taxon>
        <taxon>Vertebrata</taxon>
        <taxon>Euteleostomi</taxon>
        <taxon>Amphibia</taxon>
        <taxon>Batrachia</taxon>
        <taxon>Anura</taxon>
        <taxon>Pipoidea</taxon>
        <taxon>Pipidae</taxon>
        <taxon>Xenopodinae</taxon>
        <taxon>Xenopus</taxon>
        <taxon>Xenopus</taxon>
    </lineage>
</organism>
<evidence type="ECO:0000250" key="1">
    <source>
        <dbReference type="UniProtKB" id="O88653"/>
    </source>
</evidence>
<evidence type="ECO:0000250" key="2">
    <source>
        <dbReference type="UniProtKB" id="Q9UHA4"/>
    </source>
</evidence>
<evidence type="ECO:0000305" key="3"/>